<sequence>MTEVLYFLDCYLREFEAIVEKVTDDKYVVLDRTAFYPESGGQPSDTGKLVREEDGAEFEVVYVGKFNGDISHEITPVDGNAALGLKAGDRVRGIIDWDRRYRHMRMHTATHVIANVIEKEAGAQITGNQLGLDKSRVDFSLEAFDRDKFAEYEKIANKVITENHPVNLYLVSRKEAEEKLSRLTTLAKGFSEEISEVRLVEIEGITIEACGGTHLKNTGEIKGIKIEKLQNKGKSNRRMYFTLLD</sequence>
<gene>
    <name type="primary">alaXM</name>
    <name type="ordered locus">MA_2014</name>
</gene>
<reference key="1">
    <citation type="journal article" date="2002" name="Genome Res.">
        <title>The genome of Methanosarcina acetivorans reveals extensive metabolic and physiological diversity.</title>
        <authorList>
            <person name="Galagan J.E."/>
            <person name="Nusbaum C."/>
            <person name="Roy A."/>
            <person name="Endrizzi M.G."/>
            <person name="Macdonald P."/>
            <person name="FitzHugh W."/>
            <person name="Calvo S."/>
            <person name="Engels R."/>
            <person name="Smirnov S."/>
            <person name="Atnoor D."/>
            <person name="Brown A."/>
            <person name="Allen N."/>
            <person name="Naylor J."/>
            <person name="Stange-Thomann N."/>
            <person name="DeArellano K."/>
            <person name="Johnson R."/>
            <person name="Linton L."/>
            <person name="McEwan P."/>
            <person name="McKernan K."/>
            <person name="Talamas J."/>
            <person name="Tirrell A."/>
            <person name="Ye W."/>
            <person name="Zimmer A."/>
            <person name="Barber R.D."/>
            <person name="Cann I."/>
            <person name="Graham D.E."/>
            <person name="Grahame D.A."/>
            <person name="Guss A.M."/>
            <person name="Hedderich R."/>
            <person name="Ingram-Smith C."/>
            <person name="Kuettner H.C."/>
            <person name="Krzycki J.A."/>
            <person name="Leigh J.A."/>
            <person name="Li W."/>
            <person name="Liu J."/>
            <person name="Mukhopadhyay B."/>
            <person name="Reeve J.N."/>
            <person name="Smith K."/>
            <person name="Springer T.A."/>
            <person name="Umayam L.A."/>
            <person name="White O."/>
            <person name="White R.H."/>
            <person name="de Macario E.C."/>
            <person name="Ferry J.G."/>
            <person name="Jarrell K.F."/>
            <person name="Jing H."/>
            <person name="Macario A.J.L."/>
            <person name="Paulsen I.T."/>
            <person name="Pritchett M."/>
            <person name="Sowers K.R."/>
            <person name="Swanson R.V."/>
            <person name="Zinder S.H."/>
            <person name="Lander E."/>
            <person name="Metcalf W.W."/>
            <person name="Birren B."/>
        </authorList>
    </citation>
    <scope>NUCLEOTIDE SEQUENCE [LARGE SCALE GENOMIC DNA]</scope>
    <source>
        <strain>ATCC 35395 / DSM 2834 / JCM 12185 / C2A</strain>
    </source>
</reference>
<name>ALAXM_METAC</name>
<keyword id="KW-0963">Cytoplasm</keyword>
<keyword id="KW-0479">Metal-binding</keyword>
<keyword id="KW-1185">Reference proteome</keyword>
<keyword id="KW-0862">Zinc</keyword>
<feature type="chain" id="PRO_0000391645" description="Alanyl-tRNA editing protein AlaX-M">
    <location>
        <begin position="1"/>
        <end position="245"/>
    </location>
</feature>
<feature type="binding site" evidence="1">
    <location>
        <position position="107"/>
    </location>
    <ligand>
        <name>Zn(2+)</name>
        <dbReference type="ChEBI" id="CHEBI:29105"/>
    </ligand>
</feature>
<feature type="binding site" evidence="1">
    <location>
        <position position="111"/>
    </location>
    <ligand>
        <name>Zn(2+)</name>
        <dbReference type="ChEBI" id="CHEBI:29105"/>
    </ligand>
</feature>
<feature type="binding site" evidence="1">
    <location>
        <position position="210"/>
    </location>
    <ligand>
        <name>Zn(2+)</name>
        <dbReference type="ChEBI" id="CHEBI:29105"/>
    </ligand>
</feature>
<feature type="binding site" evidence="1">
    <location>
        <position position="214"/>
    </location>
    <ligand>
        <name>Zn(2+)</name>
        <dbReference type="ChEBI" id="CHEBI:29105"/>
    </ligand>
</feature>
<dbReference type="EMBL" id="AE010299">
    <property type="protein sequence ID" value="AAM05417.1"/>
    <property type="molecule type" value="Genomic_DNA"/>
</dbReference>
<dbReference type="RefSeq" id="WP_011022008.1">
    <property type="nucleotide sequence ID" value="NC_003552.1"/>
</dbReference>
<dbReference type="SMR" id="Q8TPA0"/>
<dbReference type="STRING" id="188937.MA_2014"/>
<dbReference type="EnsemblBacteria" id="AAM05417">
    <property type="protein sequence ID" value="AAM05417"/>
    <property type="gene ID" value="MA_2014"/>
</dbReference>
<dbReference type="GeneID" id="1473903"/>
<dbReference type="KEGG" id="mac:MA_2014"/>
<dbReference type="HOGENOM" id="CLU_004485_3_2_2"/>
<dbReference type="InParanoid" id="Q8TPA0"/>
<dbReference type="OrthoDB" id="11392at2157"/>
<dbReference type="PhylomeDB" id="Q8TPA0"/>
<dbReference type="Proteomes" id="UP000002487">
    <property type="component" value="Chromosome"/>
</dbReference>
<dbReference type="GO" id="GO:0005737">
    <property type="term" value="C:cytoplasm"/>
    <property type="evidence" value="ECO:0007669"/>
    <property type="project" value="UniProtKB-SubCell"/>
</dbReference>
<dbReference type="GO" id="GO:0004813">
    <property type="term" value="F:alanine-tRNA ligase activity"/>
    <property type="evidence" value="ECO:0007669"/>
    <property type="project" value="InterPro"/>
</dbReference>
<dbReference type="GO" id="GO:0002161">
    <property type="term" value="F:aminoacyl-tRNA deacylase activity"/>
    <property type="evidence" value="ECO:0007669"/>
    <property type="project" value="UniProtKB-ARBA"/>
</dbReference>
<dbReference type="GO" id="GO:0005524">
    <property type="term" value="F:ATP binding"/>
    <property type="evidence" value="ECO:0007669"/>
    <property type="project" value="InterPro"/>
</dbReference>
<dbReference type="GO" id="GO:0046872">
    <property type="term" value="F:metal ion binding"/>
    <property type="evidence" value="ECO:0007669"/>
    <property type="project" value="UniProtKB-KW"/>
</dbReference>
<dbReference type="GO" id="GO:0003676">
    <property type="term" value="F:nucleic acid binding"/>
    <property type="evidence" value="ECO:0007669"/>
    <property type="project" value="InterPro"/>
</dbReference>
<dbReference type="GO" id="GO:0006419">
    <property type="term" value="P:alanyl-tRNA aminoacylation"/>
    <property type="evidence" value="ECO:0007669"/>
    <property type="project" value="InterPro"/>
</dbReference>
<dbReference type="FunFam" id="2.40.30.130:FF:000010">
    <property type="entry name" value="Alanine--tRNA ligase"/>
    <property type="match status" value="1"/>
</dbReference>
<dbReference type="Gene3D" id="2.40.30.130">
    <property type="match status" value="1"/>
</dbReference>
<dbReference type="Gene3D" id="3.30.980.10">
    <property type="entry name" value="Threonyl-trna Synthetase, Chain A, domain 2"/>
    <property type="match status" value="1"/>
</dbReference>
<dbReference type="InterPro" id="IPR018165">
    <property type="entry name" value="Ala-tRNA-synth_IIc_core"/>
</dbReference>
<dbReference type="InterPro" id="IPR018164">
    <property type="entry name" value="Ala-tRNA-synth_IIc_N"/>
</dbReference>
<dbReference type="InterPro" id="IPR053424">
    <property type="entry name" value="Alanyl-tRNA_Edit-Domain"/>
</dbReference>
<dbReference type="InterPro" id="IPR051335">
    <property type="entry name" value="Alanyl-tRNA_Editing_Enzymes"/>
</dbReference>
<dbReference type="InterPro" id="IPR018163">
    <property type="entry name" value="Thr/Ala-tRNA-synth_IIc_edit"/>
</dbReference>
<dbReference type="InterPro" id="IPR009000">
    <property type="entry name" value="Transl_B-barrel_sf"/>
</dbReference>
<dbReference type="InterPro" id="IPR012947">
    <property type="entry name" value="tRNA_SAD"/>
</dbReference>
<dbReference type="NCBIfam" id="NF040865">
    <property type="entry name" value="a_tRNA_ed_AlaXM"/>
    <property type="match status" value="1"/>
</dbReference>
<dbReference type="PANTHER" id="PTHR43462">
    <property type="entry name" value="ALANYL-TRNA EDITING PROTEIN"/>
    <property type="match status" value="1"/>
</dbReference>
<dbReference type="PANTHER" id="PTHR43462:SF1">
    <property type="entry name" value="ALANYL-TRNA EDITING PROTEIN AARSD1"/>
    <property type="match status" value="1"/>
</dbReference>
<dbReference type="Pfam" id="PF01411">
    <property type="entry name" value="tRNA-synt_2c"/>
    <property type="match status" value="1"/>
</dbReference>
<dbReference type="Pfam" id="PF07973">
    <property type="entry name" value="tRNA_SAD"/>
    <property type="match status" value="1"/>
</dbReference>
<dbReference type="SMART" id="SM00863">
    <property type="entry name" value="tRNA_SAD"/>
    <property type="match status" value="1"/>
</dbReference>
<dbReference type="SUPFAM" id="SSF55186">
    <property type="entry name" value="ThrRS/AlaRS common domain"/>
    <property type="match status" value="1"/>
</dbReference>
<dbReference type="SUPFAM" id="SSF50447">
    <property type="entry name" value="Translation proteins"/>
    <property type="match status" value="1"/>
</dbReference>
<dbReference type="PROSITE" id="PS50860">
    <property type="entry name" value="AA_TRNA_LIGASE_II_ALA"/>
    <property type="match status" value="1"/>
</dbReference>
<organism>
    <name type="scientific">Methanosarcina acetivorans (strain ATCC 35395 / DSM 2834 / JCM 12185 / C2A)</name>
    <dbReference type="NCBI Taxonomy" id="188937"/>
    <lineage>
        <taxon>Archaea</taxon>
        <taxon>Methanobacteriati</taxon>
        <taxon>Methanobacteriota</taxon>
        <taxon>Stenosarchaea group</taxon>
        <taxon>Methanomicrobia</taxon>
        <taxon>Methanosarcinales</taxon>
        <taxon>Methanosarcinaceae</taxon>
        <taxon>Methanosarcina</taxon>
    </lineage>
</organism>
<protein>
    <recommendedName>
        <fullName>Alanyl-tRNA editing protein AlaX-M</fullName>
        <shortName>AlaX-M</shortName>
    </recommendedName>
    <alternativeName>
        <fullName>Alanyl-tRNA deacylase AlaX-M</fullName>
    </alternativeName>
</protein>
<evidence type="ECO:0000250" key="1"/>
<evidence type="ECO:0000305" key="2"/>
<proteinExistence type="inferred from homology"/>
<comment type="function">
    <text evidence="1">Functions in trans to edit the amino acid moiety from mischarged charged tRNA(Ala).</text>
</comment>
<comment type="cofactor">
    <cofactor evidence="1">
        <name>Zn(2+)</name>
        <dbReference type="ChEBI" id="CHEBI:29105"/>
    </cofactor>
    <text evidence="1">Binds 1 zinc ion per subunit.</text>
</comment>
<comment type="subcellular location">
    <subcellularLocation>
        <location evidence="2">Cytoplasm</location>
    </subcellularLocation>
</comment>
<comment type="similarity">
    <text evidence="2">Belongs to the class-II aminoacyl-tRNA synthetase family. Editing domain AlaX-M subfamily.</text>
</comment>
<accession>Q8TPA0</accession>